<keyword id="KW-0067">ATP-binding</keyword>
<keyword id="KW-0143">Chaperone</keyword>
<keyword id="KW-0963">Cytoplasm</keyword>
<keyword id="KW-0460">Magnesium</keyword>
<keyword id="KW-0479">Metal-binding</keyword>
<keyword id="KW-0547">Nucleotide-binding</keyword>
<keyword id="KW-1185">Reference proteome</keyword>
<protein>
    <recommendedName>
        <fullName evidence="5">Translation initiation factor eIF2 assembly protein</fullName>
    </recommendedName>
    <alternativeName>
        <fullName>Cell division cycle protein 123</fullName>
    </alternativeName>
</protein>
<sequence length="424" mass="48087">MAGNNNTPLGSSSGLPFPTLKRSHILHCSYHYWHPKYRSVTPKARLIPLNDAFLNYLRADGIILPPQDENPPGADDDSGIYSLSDDSDPDDDDVDPSIQWQEIHAQIKATIEELGGKVAPKLNWSAPKDATWISATNDMQCRTPNDIYLLLKSSDFVTHDLEHAFDGCVSDTEEKSDGEVEVEVEEGKEKEQKQAEQSRIPYHLVLRKYITLNPSLEFRCFVRDRKLLCLCQRDLNHFNFLFGLRDNLRDKIQTFFDIRLRDTFPDPDFVFDVYVPPPHNRVWLIDINPFALRTDPLLFSWLEILNLKVPSCDDDGESDTVRVEMRRGGAERGTENGIGDEESEGGDEDDLDAATTFSFVPEFRLVEHDDPEAYGFATPRYSAHKLPRDVVDASRSGPGGMNEFLGQWQDILAKRIQEDEEGGA</sequence>
<proteinExistence type="inferred from homology"/>
<organism>
    <name type="scientific">Ajellomyces capsulatus (strain NAm1 / WU24)</name>
    <name type="common">Darling's disease fungus</name>
    <name type="synonym">Histoplasma capsulatum</name>
    <dbReference type="NCBI Taxonomy" id="2059318"/>
    <lineage>
        <taxon>Eukaryota</taxon>
        <taxon>Fungi</taxon>
        <taxon>Dikarya</taxon>
        <taxon>Ascomycota</taxon>
        <taxon>Pezizomycotina</taxon>
        <taxon>Eurotiomycetes</taxon>
        <taxon>Eurotiomycetidae</taxon>
        <taxon>Onygenales</taxon>
        <taxon>Ajellomycetaceae</taxon>
        <taxon>Histoplasma</taxon>
    </lineage>
</organism>
<gene>
    <name type="primary">CDC123</name>
    <name type="ORF">HCAG_05145</name>
</gene>
<accession>A6R687</accession>
<comment type="function">
    <text evidence="2">ATP-dependent protein-folding chaperone for the eIF2 complex. Binds to the gamma subunit of the eIF2 complex which allows the subunit to assemble with the alpha and beta subunits.</text>
</comment>
<comment type="subcellular location">
    <subcellularLocation>
        <location evidence="2">Cytoplasm</location>
    </subcellularLocation>
</comment>
<comment type="similarity">
    <text evidence="5">Belongs to the CDC123 family.</text>
</comment>
<dbReference type="EMBL" id="CH476659">
    <property type="protein sequence ID" value="EDN08646.1"/>
    <property type="molecule type" value="Genomic_DNA"/>
</dbReference>
<dbReference type="SMR" id="A6R687"/>
<dbReference type="STRING" id="339724.A6R687"/>
<dbReference type="KEGG" id="aje:HCAG_05145"/>
<dbReference type="VEuPathDB" id="FungiDB:HCAG_05145"/>
<dbReference type="HOGENOM" id="CLU_034402_2_0_1"/>
<dbReference type="OMA" id="TFPDPNF"/>
<dbReference type="OrthoDB" id="12148at299071"/>
<dbReference type="Proteomes" id="UP000009297">
    <property type="component" value="Unassembled WGS sequence"/>
</dbReference>
<dbReference type="GO" id="GO:0005737">
    <property type="term" value="C:cytoplasm"/>
    <property type="evidence" value="ECO:0000250"/>
    <property type="project" value="UniProtKB"/>
</dbReference>
<dbReference type="GO" id="GO:0005524">
    <property type="term" value="F:ATP binding"/>
    <property type="evidence" value="ECO:0000250"/>
    <property type="project" value="UniProtKB"/>
</dbReference>
<dbReference type="GO" id="GO:0000287">
    <property type="term" value="F:magnesium ion binding"/>
    <property type="evidence" value="ECO:0000250"/>
    <property type="project" value="UniProtKB"/>
</dbReference>
<dbReference type="GO" id="GO:0044183">
    <property type="term" value="F:protein folding chaperone"/>
    <property type="evidence" value="ECO:0000250"/>
    <property type="project" value="UniProtKB"/>
</dbReference>
<dbReference type="GO" id="GO:1905143">
    <property type="term" value="P:eukaryotic translation initiation factor 2 complex assembly"/>
    <property type="evidence" value="ECO:0000250"/>
    <property type="project" value="UniProtKB"/>
</dbReference>
<dbReference type="InterPro" id="IPR009772">
    <property type="entry name" value="CDC123"/>
</dbReference>
<dbReference type="PANTHER" id="PTHR15323:SF6">
    <property type="entry name" value="CELL DIVISION CYCLE PROTEIN 123 HOMOLOG"/>
    <property type="match status" value="1"/>
</dbReference>
<dbReference type="PANTHER" id="PTHR15323">
    <property type="entry name" value="D123 PROTEIN"/>
    <property type="match status" value="1"/>
</dbReference>
<dbReference type="Pfam" id="PF07065">
    <property type="entry name" value="D123"/>
    <property type="match status" value="1"/>
</dbReference>
<evidence type="ECO:0000250" key="1">
    <source>
        <dbReference type="UniProtKB" id="O75794"/>
    </source>
</evidence>
<evidence type="ECO:0000250" key="2">
    <source>
        <dbReference type="UniProtKB" id="Q05791"/>
    </source>
</evidence>
<evidence type="ECO:0000250" key="3">
    <source>
        <dbReference type="UniProtKB" id="Q9P7N5"/>
    </source>
</evidence>
<evidence type="ECO:0000256" key="4">
    <source>
        <dbReference type="SAM" id="MobiDB-lite"/>
    </source>
</evidence>
<evidence type="ECO:0000305" key="5"/>
<reference key="1">
    <citation type="journal article" date="2009" name="Genome Res.">
        <title>Comparative genomic analyses of the human fungal pathogens Coccidioides and their relatives.</title>
        <authorList>
            <person name="Sharpton T.J."/>
            <person name="Stajich J.E."/>
            <person name="Rounsley S.D."/>
            <person name="Gardner M.J."/>
            <person name="Wortman J.R."/>
            <person name="Jordar V.S."/>
            <person name="Maiti R."/>
            <person name="Kodira C.D."/>
            <person name="Neafsey D.E."/>
            <person name="Zeng Q."/>
            <person name="Hung C.-Y."/>
            <person name="McMahan C."/>
            <person name="Muszewska A."/>
            <person name="Grynberg M."/>
            <person name="Mandel M.A."/>
            <person name="Kellner E.M."/>
            <person name="Barker B.M."/>
            <person name="Galgiani J.N."/>
            <person name="Orbach M.J."/>
            <person name="Kirkland T.N."/>
            <person name="Cole G.T."/>
            <person name="Henn M.R."/>
            <person name="Birren B.W."/>
            <person name="Taylor J.W."/>
        </authorList>
    </citation>
    <scope>NUCLEOTIDE SEQUENCE [LARGE SCALE GENOMIC DNA]</scope>
    <source>
        <strain>NAm1 / WU24</strain>
    </source>
</reference>
<name>CD123_AJECN</name>
<feature type="chain" id="PRO_0000350934" description="Translation initiation factor eIF2 assembly protein">
    <location>
        <begin position="1"/>
        <end position="424"/>
    </location>
</feature>
<feature type="region of interest" description="Disordered" evidence="4">
    <location>
        <begin position="64"/>
        <end position="95"/>
    </location>
</feature>
<feature type="region of interest" description="Disordered" evidence="4">
    <location>
        <begin position="325"/>
        <end position="351"/>
    </location>
</feature>
<feature type="compositionally biased region" description="Acidic residues" evidence="4">
    <location>
        <begin position="85"/>
        <end position="95"/>
    </location>
</feature>
<feature type="compositionally biased region" description="Basic and acidic residues" evidence="4">
    <location>
        <begin position="325"/>
        <end position="334"/>
    </location>
</feature>
<feature type="compositionally biased region" description="Acidic residues" evidence="4">
    <location>
        <begin position="338"/>
        <end position="351"/>
    </location>
</feature>
<feature type="binding site" evidence="1">
    <location>
        <position position="121"/>
    </location>
    <ligand>
        <name>ATP</name>
        <dbReference type="ChEBI" id="CHEBI:30616"/>
    </ligand>
</feature>
<feature type="binding site" evidence="1">
    <location>
        <position position="124"/>
    </location>
    <ligand>
        <name>ATP</name>
        <dbReference type="ChEBI" id="CHEBI:30616"/>
    </ligand>
</feature>
<feature type="binding site" evidence="1">
    <location>
        <position position="126"/>
    </location>
    <ligand>
        <name>ATP</name>
        <dbReference type="ChEBI" id="CHEBI:30616"/>
    </ligand>
</feature>
<feature type="binding site" evidence="3">
    <location>
        <position position="128"/>
    </location>
    <ligand>
        <name>ATP</name>
        <dbReference type="ChEBI" id="CHEBI:30616"/>
    </ligand>
</feature>
<feature type="binding site" evidence="3">
    <location>
        <position position="207"/>
    </location>
    <ligand>
        <name>ATP</name>
        <dbReference type="ChEBI" id="CHEBI:30616"/>
    </ligand>
</feature>
<feature type="binding site" evidence="1">
    <location>
        <position position="208"/>
    </location>
    <ligand>
        <name>ATP</name>
        <dbReference type="ChEBI" id="CHEBI:30616"/>
    </ligand>
</feature>
<feature type="binding site" evidence="1">
    <location>
        <position position="217"/>
    </location>
    <ligand>
        <name>ATP</name>
        <dbReference type="ChEBI" id="CHEBI:30616"/>
    </ligand>
</feature>
<feature type="binding site" evidence="1">
    <location>
        <position position="219"/>
    </location>
    <ligand>
        <name>ATP</name>
        <dbReference type="ChEBI" id="CHEBI:30616"/>
    </ligand>
</feature>
<feature type="binding site" evidence="1">
    <location>
        <position position="233"/>
    </location>
    <ligand>
        <name>ATP</name>
        <dbReference type="ChEBI" id="CHEBI:30616"/>
    </ligand>
</feature>
<feature type="binding site" evidence="3">
    <location>
        <position position="272"/>
    </location>
    <ligand>
        <name>ATP</name>
        <dbReference type="ChEBI" id="CHEBI:30616"/>
    </ligand>
</feature>
<feature type="binding site" evidence="1">
    <location>
        <position position="286"/>
    </location>
    <ligand>
        <name>ATP</name>
        <dbReference type="ChEBI" id="CHEBI:30616"/>
    </ligand>
</feature>
<feature type="binding site" evidence="1">
    <location>
        <position position="286"/>
    </location>
    <ligand>
        <name>Mg(2+)</name>
        <dbReference type="ChEBI" id="CHEBI:18420"/>
    </ligand>
</feature>
<feature type="binding site" evidence="1">
    <location>
        <position position="288"/>
    </location>
    <ligand>
        <name>ATP</name>
        <dbReference type="ChEBI" id="CHEBI:30616"/>
    </ligand>
</feature>
<feature type="binding site" evidence="1">
    <location>
        <position position="288"/>
    </location>
    <ligand>
        <name>Mg(2+)</name>
        <dbReference type="ChEBI" id="CHEBI:18420"/>
    </ligand>
</feature>